<keyword id="KW-0012">Acyltransferase</keyword>
<keyword id="KW-0028">Amino-acid biosynthesis</keyword>
<keyword id="KW-0963">Cytoplasm</keyword>
<keyword id="KW-0486">Methionine biosynthesis</keyword>
<keyword id="KW-0808">Transferase</keyword>
<evidence type="ECO:0000255" key="1">
    <source>
        <dbReference type="HAMAP-Rule" id="MF_00296"/>
    </source>
</evidence>
<comment type="function">
    <text evidence="1">Transfers an acetyl group from acetyl-CoA to L-homoserine, forming acetyl-L-homoserine.</text>
</comment>
<comment type="catalytic activity">
    <reaction evidence="1">
        <text>L-homoserine + acetyl-CoA = O-acetyl-L-homoserine + CoA</text>
        <dbReference type="Rhea" id="RHEA:13701"/>
        <dbReference type="ChEBI" id="CHEBI:57287"/>
        <dbReference type="ChEBI" id="CHEBI:57288"/>
        <dbReference type="ChEBI" id="CHEBI:57476"/>
        <dbReference type="ChEBI" id="CHEBI:57716"/>
        <dbReference type="EC" id="2.3.1.31"/>
    </reaction>
</comment>
<comment type="pathway">
    <text evidence="1">Amino-acid biosynthesis; L-methionine biosynthesis via de novo pathway; O-acetyl-L-homoserine from L-homoserine: step 1/1.</text>
</comment>
<comment type="subunit">
    <text evidence="1">Homodimer.</text>
</comment>
<comment type="subcellular location">
    <subcellularLocation>
        <location evidence="1">Cytoplasm</location>
    </subcellularLocation>
</comment>
<comment type="similarity">
    <text evidence="1">Belongs to the AB hydrolase superfamily. MetX family.</text>
</comment>
<dbReference type="EC" id="2.3.1.31" evidence="1"/>
<dbReference type="EMBL" id="CP000325">
    <property type="protein sequence ID" value="ABL03970.1"/>
    <property type="molecule type" value="Genomic_DNA"/>
</dbReference>
<dbReference type="RefSeq" id="WP_011739590.1">
    <property type="nucleotide sequence ID" value="NC_008611.1"/>
</dbReference>
<dbReference type="SMR" id="A0PNQ1"/>
<dbReference type="ESTHER" id="mycua-metx">
    <property type="family name" value="Homoserine_transacetylase"/>
</dbReference>
<dbReference type="KEGG" id="mul:MUL_1437"/>
<dbReference type="eggNOG" id="COG2021">
    <property type="taxonomic scope" value="Bacteria"/>
</dbReference>
<dbReference type="HOGENOM" id="CLU_028760_1_0_11"/>
<dbReference type="UniPathway" id="UPA00051">
    <property type="reaction ID" value="UER00074"/>
</dbReference>
<dbReference type="Proteomes" id="UP000000765">
    <property type="component" value="Chromosome"/>
</dbReference>
<dbReference type="GO" id="GO:0005737">
    <property type="term" value="C:cytoplasm"/>
    <property type="evidence" value="ECO:0007669"/>
    <property type="project" value="UniProtKB-SubCell"/>
</dbReference>
<dbReference type="GO" id="GO:0004414">
    <property type="term" value="F:homoserine O-acetyltransferase activity"/>
    <property type="evidence" value="ECO:0007669"/>
    <property type="project" value="UniProtKB-UniRule"/>
</dbReference>
<dbReference type="GO" id="GO:0009092">
    <property type="term" value="P:homoserine metabolic process"/>
    <property type="evidence" value="ECO:0007669"/>
    <property type="project" value="TreeGrafter"/>
</dbReference>
<dbReference type="GO" id="GO:0009086">
    <property type="term" value="P:methionine biosynthetic process"/>
    <property type="evidence" value="ECO:0007669"/>
    <property type="project" value="UniProtKB-UniRule"/>
</dbReference>
<dbReference type="Gene3D" id="3.40.50.1820">
    <property type="entry name" value="alpha/beta hydrolase"/>
    <property type="match status" value="1"/>
</dbReference>
<dbReference type="HAMAP" id="MF_00296">
    <property type="entry name" value="MetX_acyltransf"/>
    <property type="match status" value="1"/>
</dbReference>
<dbReference type="InterPro" id="IPR000073">
    <property type="entry name" value="AB_hydrolase_1"/>
</dbReference>
<dbReference type="InterPro" id="IPR029058">
    <property type="entry name" value="AB_hydrolase_fold"/>
</dbReference>
<dbReference type="InterPro" id="IPR008220">
    <property type="entry name" value="HAT_MetX-like"/>
</dbReference>
<dbReference type="NCBIfam" id="TIGR01392">
    <property type="entry name" value="homoserO_Ac_trn"/>
    <property type="match status" value="1"/>
</dbReference>
<dbReference type="NCBIfam" id="NF001209">
    <property type="entry name" value="PRK00175.1"/>
    <property type="match status" value="1"/>
</dbReference>
<dbReference type="PANTHER" id="PTHR32268">
    <property type="entry name" value="HOMOSERINE O-ACETYLTRANSFERASE"/>
    <property type="match status" value="1"/>
</dbReference>
<dbReference type="PANTHER" id="PTHR32268:SF11">
    <property type="entry name" value="HOMOSERINE O-ACETYLTRANSFERASE"/>
    <property type="match status" value="1"/>
</dbReference>
<dbReference type="Pfam" id="PF00561">
    <property type="entry name" value="Abhydrolase_1"/>
    <property type="match status" value="1"/>
</dbReference>
<dbReference type="PIRSF" id="PIRSF000443">
    <property type="entry name" value="Homoser_Ac_trans"/>
    <property type="match status" value="1"/>
</dbReference>
<dbReference type="SUPFAM" id="SSF53474">
    <property type="entry name" value="alpha/beta-Hydrolases"/>
    <property type="match status" value="1"/>
</dbReference>
<feature type="chain" id="PRO_1000021889" description="Homoserine O-acetyltransferase">
    <location>
        <begin position="1"/>
        <end position="379"/>
    </location>
</feature>
<feature type="domain" description="AB hydrolase-1" evidence="1">
    <location>
        <begin position="52"/>
        <end position="356"/>
    </location>
</feature>
<feature type="active site" description="Nucleophile" evidence="1">
    <location>
        <position position="157"/>
    </location>
</feature>
<feature type="active site" evidence="1">
    <location>
        <position position="320"/>
    </location>
</feature>
<feature type="active site" evidence="1">
    <location>
        <position position="350"/>
    </location>
</feature>
<feature type="binding site" evidence="1">
    <location>
        <position position="227"/>
    </location>
    <ligand>
        <name>substrate</name>
    </ligand>
</feature>
<feature type="binding site" evidence="1">
    <location>
        <position position="351"/>
    </location>
    <ligand>
        <name>substrate</name>
    </ligand>
</feature>
<organism>
    <name type="scientific">Mycobacterium ulcerans (strain Agy99)</name>
    <dbReference type="NCBI Taxonomy" id="362242"/>
    <lineage>
        <taxon>Bacteria</taxon>
        <taxon>Bacillati</taxon>
        <taxon>Actinomycetota</taxon>
        <taxon>Actinomycetes</taxon>
        <taxon>Mycobacteriales</taxon>
        <taxon>Mycobacteriaceae</taxon>
        <taxon>Mycobacterium</taxon>
        <taxon>Mycobacterium ulcerans group</taxon>
    </lineage>
</organism>
<name>METXA_MYCUA</name>
<proteinExistence type="inferred from homology"/>
<protein>
    <recommendedName>
        <fullName evidence="1">Homoserine O-acetyltransferase</fullName>
        <shortName evidence="1">HAT</shortName>
        <ecNumber evidence="1">2.3.1.31</ecNumber>
    </recommendedName>
    <alternativeName>
        <fullName evidence="1">Homoserine transacetylase</fullName>
        <shortName evidence="1">HTA</shortName>
    </alternativeName>
</protein>
<gene>
    <name evidence="1" type="primary">metXA</name>
    <name type="ordered locus">MUL_1437</name>
</gene>
<reference key="1">
    <citation type="journal article" date="2007" name="Genome Res.">
        <title>Reductive evolution and niche adaptation inferred from the genome of Mycobacterium ulcerans, the causative agent of Buruli ulcer.</title>
        <authorList>
            <person name="Stinear T.P."/>
            <person name="Seemann T."/>
            <person name="Pidot S."/>
            <person name="Frigui W."/>
            <person name="Reysset G."/>
            <person name="Garnier T."/>
            <person name="Meurice G."/>
            <person name="Simon D."/>
            <person name="Bouchier C."/>
            <person name="Ma L."/>
            <person name="Tichit M."/>
            <person name="Porter J.L."/>
            <person name="Ryan J."/>
            <person name="Johnson P.D.R."/>
            <person name="Davies J.K."/>
            <person name="Jenkin G.A."/>
            <person name="Small P.L.C."/>
            <person name="Jones L.M."/>
            <person name="Tekaia F."/>
            <person name="Laval F."/>
            <person name="Daffe M."/>
            <person name="Parkhill J."/>
            <person name="Cole S.T."/>
        </authorList>
    </citation>
    <scope>NUCLEOTIDE SEQUENCE [LARGE SCALE GENOMIC DNA]</scope>
    <source>
        <strain>Agy99</strain>
    </source>
</reference>
<sequence>MTISDVPTQTLPAEGEVRLVDIGSLRLESGAVIDNVCIALQRWGELSPTRDNVVMVLHALTGDSHVTGPAGPGHSTPGWWDGMVGPGAPIDTNRWCAVATNVLGGCRGSTGPSSLARDGKPWGSRFPLISVRDQVEADMAALAALGITQVAAVVGGSMGGARALEWIVGHPDRVRSALLLAVGARATADQIGTQTTQIAAIKADPNWRNGDYHETGCRPEAGLKVARRFAHLTYRGEIELDSRFANDGQGGEDPADGGRYAIQSYLEHQGDKLLARFDAGSYVILTEALSRHDVGRGRDGIHAALRGCPVPVVVGGITSDRLYPLRLQQELADLLPGCAGLEVVDSIRGHDGFLVESEAVGELIHKTLRLAEDRSSRPW</sequence>
<accession>A0PNQ1</accession>